<organism>
    <name type="scientific">Alkaliphilus oremlandii (strain OhILAs)</name>
    <name type="common">Clostridium oremlandii (strain OhILAs)</name>
    <dbReference type="NCBI Taxonomy" id="350688"/>
    <lineage>
        <taxon>Bacteria</taxon>
        <taxon>Bacillati</taxon>
        <taxon>Bacillota</taxon>
        <taxon>Clostridia</taxon>
        <taxon>Peptostreptococcales</taxon>
        <taxon>Natronincolaceae</taxon>
        <taxon>Alkaliphilus</taxon>
    </lineage>
</organism>
<evidence type="ECO:0000250" key="1"/>
<evidence type="ECO:0000305" key="2"/>
<name>BIOF_ALKOO</name>
<protein>
    <recommendedName>
        <fullName>8-amino-7-oxononanoate synthase</fullName>
        <shortName>AONS</shortName>
        <ecNumber>2.3.1.47</ecNumber>
    </recommendedName>
    <alternativeName>
        <fullName>7-keto-8-amino-pelargonic acid synthase</fullName>
        <shortName>7-KAP synthase</shortName>
        <shortName>KAPA synthase</shortName>
    </alternativeName>
    <alternativeName>
        <fullName>8-amino-7-ketopelargonate synthase</fullName>
    </alternativeName>
    <alternativeName>
        <fullName>Alpha-oxoamine synthase</fullName>
    </alternativeName>
</protein>
<dbReference type="EC" id="2.3.1.47"/>
<dbReference type="EMBL" id="CP000853">
    <property type="protein sequence ID" value="ABW18456.1"/>
    <property type="molecule type" value="Genomic_DNA"/>
</dbReference>
<dbReference type="RefSeq" id="WP_012158768.1">
    <property type="nucleotide sequence ID" value="NC_009922.1"/>
</dbReference>
<dbReference type="SMR" id="A8MEX7"/>
<dbReference type="STRING" id="350688.Clos_0909"/>
<dbReference type="KEGG" id="aoe:Clos_0909"/>
<dbReference type="eggNOG" id="COG0156">
    <property type="taxonomic scope" value="Bacteria"/>
</dbReference>
<dbReference type="HOGENOM" id="CLU_015846_11_0_9"/>
<dbReference type="OrthoDB" id="9807157at2"/>
<dbReference type="UniPathway" id="UPA00078"/>
<dbReference type="Proteomes" id="UP000000269">
    <property type="component" value="Chromosome"/>
</dbReference>
<dbReference type="GO" id="GO:0008710">
    <property type="term" value="F:8-amino-7-oxononanoate synthase activity"/>
    <property type="evidence" value="ECO:0000250"/>
    <property type="project" value="UniProtKB"/>
</dbReference>
<dbReference type="GO" id="GO:0008890">
    <property type="term" value="F:glycine C-acetyltransferase activity"/>
    <property type="evidence" value="ECO:0000250"/>
    <property type="project" value="UniProtKB"/>
</dbReference>
<dbReference type="GO" id="GO:0030170">
    <property type="term" value="F:pyridoxal phosphate binding"/>
    <property type="evidence" value="ECO:0000250"/>
    <property type="project" value="UniProtKB"/>
</dbReference>
<dbReference type="GO" id="GO:0009102">
    <property type="term" value="P:biotin biosynthetic process"/>
    <property type="evidence" value="ECO:0000250"/>
    <property type="project" value="UniProtKB"/>
</dbReference>
<dbReference type="CDD" id="cd06454">
    <property type="entry name" value="KBL_like"/>
    <property type="match status" value="1"/>
</dbReference>
<dbReference type="FunFam" id="3.90.1150.10:FF:000004">
    <property type="entry name" value="2-amino-3-ketobutyrate coenzyme A ligase"/>
    <property type="match status" value="1"/>
</dbReference>
<dbReference type="FunFam" id="3.40.640.10:FF:000006">
    <property type="entry name" value="5-aminolevulinate synthase, mitochondrial"/>
    <property type="match status" value="1"/>
</dbReference>
<dbReference type="Gene3D" id="3.90.1150.10">
    <property type="entry name" value="Aspartate Aminotransferase, domain 1"/>
    <property type="match status" value="1"/>
</dbReference>
<dbReference type="Gene3D" id="3.40.640.10">
    <property type="entry name" value="Type I PLP-dependent aspartate aminotransferase-like (Major domain)"/>
    <property type="match status" value="1"/>
</dbReference>
<dbReference type="InterPro" id="IPR001917">
    <property type="entry name" value="Aminotrans_II_pyridoxalP_BS"/>
</dbReference>
<dbReference type="InterPro" id="IPR004839">
    <property type="entry name" value="Aminotransferase_I/II_large"/>
</dbReference>
<dbReference type="InterPro" id="IPR050087">
    <property type="entry name" value="AON_synthase_class-II"/>
</dbReference>
<dbReference type="InterPro" id="IPR010962">
    <property type="entry name" value="AONS_Archaea/Firmicutes"/>
</dbReference>
<dbReference type="InterPro" id="IPR004723">
    <property type="entry name" value="AONS_Archaea/Proteobacteria"/>
</dbReference>
<dbReference type="InterPro" id="IPR015424">
    <property type="entry name" value="PyrdxlP-dep_Trfase"/>
</dbReference>
<dbReference type="InterPro" id="IPR015421">
    <property type="entry name" value="PyrdxlP-dep_Trfase_major"/>
</dbReference>
<dbReference type="InterPro" id="IPR015422">
    <property type="entry name" value="PyrdxlP-dep_Trfase_small"/>
</dbReference>
<dbReference type="NCBIfam" id="TIGR00858">
    <property type="entry name" value="bioF"/>
    <property type="match status" value="1"/>
</dbReference>
<dbReference type="NCBIfam" id="TIGR01825">
    <property type="entry name" value="gly_Cac_T_rel"/>
    <property type="match status" value="1"/>
</dbReference>
<dbReference type="NCBIfam" id="NF005394">
    <property type="entry name" value="PRK06939.1"/>
    <property type="match status" value="1"/>
</dbReference>
<dbReference type="PANTHER" id="PTHR13693">
    <property type="entry name" value="CLASS II AMINOTRANSFERASE/8-AMINO-7-OXONONANOATE SYNTHASE"/>
    <property type="match status" value="1"/>
</dbReference>
<dbReference type="PANTHER" id="PTHR13693:SF3">
    <property type="entry name" value="LD36009P"/>
    <property type="match status" value="1"/>
</dbReference>
<dbReference type="Pfam" id="PF00155">
    <property type="entry name" value="Aminotran_1_2"/>
    <property type="match status" value="1"/>
</dbReference>
<dbReference type="SUPFAM" id="SSF53383">
    <property type="entry name" value="PLP-dependent transferases"/>
    <property type="match status" value="1"/>
</dbReference>
<dbReference type="PROSITE" id="PS00599">
    <property type="entry name" value="AA_TRANSFER_CLASS_2"/>
    <property type="match status" value="1"/>
</dbReference>
<feature type="chain" id="PRO_0000380893" description="8-amino-7-oxononanoate synthase">
    <location>
        <begin position="1"/>
        <end position="395"/>
    </location>
</feature>
<feature type="binding site" evidence="1">
    <location>
        <position position="24"/>
    </location>
    <ligand>
        <name>substrate</name>
    </ligand>
</feature>
<feature type="binding site" evidence="1">
    <location>
        <begin position="111"/>
        <end position="112"/>
    </location>
    <ligand>
        <name>pyridoxal 5'-phosphate</name>
        <dbReference type="ChEBI" id="CHEBI:597326"/>
    </ligand>
</feature>
<feature type="binding site" evidence="1">
    <location>
        <position position="136"/>
    </location>
    <ligand>
        <name>substrate</name>
    </ligand>
</feature>
<feature type="binding site" evidence="1">
    <location>
        <position position="184"/>
    </location>
    <ligand>
        <name>pyridoxal 5'-phosphate</name>
        <dbReference type="ChEBI" id="CHEBI:597326"/>
    </ligand>
</feature>
<feature type="binding site" evidence="1">
    <location>
        <begin position="209"/>
        <end position="212"/>
    </location>
    <ligand>
        <name>pyridoxal 5'-phosphate</name>
        <dbReference type="ChEBI" id="CHEBI:597326"/>
    </ligand>
</feature>
<feature type="binding site" evidence="1">
    <location>
        <begin position="240"/>
        <end position="243"/>
    </location>
    <ligand>
        <name>pyridoxal 5'-phosphate</name>
        <dbReference type="ChEBI" id="CHEBI:597326"/>
    </ligand>
</feature>
<feature type="binding site" evidence="1">
    <location>
        <position position="357"/>
    </location>
    <ligand>
        <name>substrate</name>
    </ligand>
</feature>
<feature type="modified residue" description="N6-(pyridoxal phosphate)lysine" evidence="1">
    <location>
        <position position="243"/>
    </location>
</feature>
<gene>
    <name type="ordered locus">Clos_0909</name>
</gene>
<comment type="function">
    <text evidence="1">Catalyzes the decarboxylative condensation of pimeloyl-[acyl-carrier protein] and L-alanine to produce 8-amino-7-oxononanoate (AON), [acyl-carrier protein], and carbon dioxide.</text>
</comment>
<comment type="catalytic activity">
    <reaction>
        <text>6-carboxyhexanoyl-[ACP] + L-alanine + H(+) = (8S)-8-amino-7-oxononanoate + holo-[ACP] + CO2</text>
        <dbReference type="Rhea" id="RHEA:42288"/>
        <dbReference type="Rhea" id="RHEA-COMP:9685"/>
        <dbReference type="Rhea" id="RHEA-COMP:9955"/>
        <dbReference type="ChEBI" id="CHEBI:15378"/>
        <dbReference type="ChEBI" id="CHEBI:16526"/>
        <dbReference type="ChEBI" id="CHEBI:57972"/>
        <dbReference type="ChEBI" id="CHEBI:64479"/>
        <dbReference type="ChEBI" id="CHEBI:78846"/>
        <dbReference type="ChEBI" id="CHEBI:149468"/>
        <dbReference type="EC" id="2.3.1.47"/>
    </reaction>
</comment>
<comment type="cofactor">
    <cofactor evidence="1">
        <name>pyridoxal 5'-phosphate</name>
        <dbReference type="ChEBI" id="CHEBI:597326"/>
    </cofactor>
</comment>
<comment type="pathway">
    <text>Cofactor biosynthesis; biotin biosynthesis.</text>
</comment>
<comment type="subunit">
    <text evidence="1">Homodimer.</text>
</comment>
<comment type="similarity">
    <text evidence="2">Belongs to the class-II pyridoxal-phosphate-dependent aminotransferase family. BioF subfamily.</text>
</comment>
<proteinExistence type="inferred from homology"/>
<keyword id="KW-0012">Acyltransferase</keyword>
<keyword id="KW-0093">Biotin biosynthesis</keyword>
<keyword id="KW-0663">Pyridoxal phosphate</keyword>
<keyword id="KW-1185">Reference proteome</keyword>
<keyword id="KW-0808">Transferase</keyword>
<reference key="1">
    <citation type="submission" date="2007-10" db="EMBL/GenBank/DDBJ databases">
        <title>Complete genome of Alkaliphilus oremlandii OhILAs.</title>
        <authorList>
            <person name="Copeland A."/>
            <person name="Lucas S."/>
            <person name="Lapidus A."/>
            <person name="Barry K."/>
            <person name="Detter J.C."/>
            <person name="Glavina del Rio T."/>
            <person name="Hammon N."/>
            <person name="Israni S."/>
            <person name="Dalin E."/>
            <person name="Tice H."/>
            <person name="Pitluck S."/>
            <person name="Chain P."/>
            <person name="Malfatti S."/>
            <person name="Shin M."/>
            <person name="Vergez L."/>
            <person name="Schmutz J."/>
            <person name="Larimer F."/>
            <person name="Land M."/>
            <person name="Hauser L."/>
            <person name="Kyrpides N."/>
            <person name="Mikhailova N."/>
            <person name="Stolz J.F."/>
            <person name="Dawson A."/>
            <person name="Fisher E."/>
            <person name="Crable B."/>
            <person name="Perera E."/>
            <person name="Lisak J."/>
            <person name="Ranganathan M."/>
            <person name="Basu P."/>
            <person name="Richardson P."/>
        </authorList>
    </citation>
    <scope>NUCLEOTIDE SEQUENCE [LARGE SCALE GENOMIC DNA]</scope>
    <source>
        <strain>OhILAs</strain>
    </source>
</reference>
<sequence>MSNVHELNFLKEKIQELKDQGVYRQLPVLEGPNEAESILNGKKVINLSSNNYLGFANHPRLKKAAIEAVEKYGVGSGAVRTIVGNMDIHEILDKKLAEFKREEAVMSFQSGFNCNAGTIQAITEKGDLIISDELNHASIIDGARLSRADKTIFKHADMNNLEEVLKANRDKYRNMLIITDGVFSMDGDIAPLPDIVGLAEKYNAMTYVDDAHGSGVLGESGRGTVDHFGLHGRVDFTIGTLSKAIGVVGGYVAGSATMRDWLSHRGRPLLFSTSLPPAAIAAITEAINMLMTTTEYTDRLWDNAKYFKAKMSQLGFNIGNSQTPITPVIIGDEAKTMEFSRKLLENGVFVSAIVFPTVPKGTGRLRCMVTAGHTKEQLDRAVETFKKVGEEMNLL</sequence>
<accession>A8MEX7</accession>